<evidence type="ECO:0000250" key="1">
    <source>
        <dbReference type="UniProtKB" id="Q95RU0"/>
    </source>
</evidence>
<evidence type="ECO:0000255" key="2"/>
<evidence type="ECO:0000255" key="3">
    <source>
        <dbReference type="PROSITE-ProRule" id="PRU00076"/>
    </source>
</evidence>
<evidence type="ECO:0000305" key="4"/>
<evidence type="ECO:0000312" key="5">
    <source>
        <dbReference type="EMBL" id="EDW92844.1"/>
    </source>
</evidence>
<reference evidence="5" key="1">
    <citation type="journal article" date="2007" name="Nature">
        <title>Evolution of genes and genomes on the Drosophila phylogeny.</title>
        <authorList>
            <consortium name="Drosophila 12 genomes consortium"/>
        </authorList>
    </citation>
    <scope>NUCLEOTIDE SEQUENCE [LARGE SCALE GENOMIC DNA]</scope>
    <source>
        <strain evidence="5">Tai18E2 / Tucson 14021-0261.01</strain>
    </source>
</reference>
<comment type="function">
    <text evidence="1">Has a role in spermatogenesis and oogenesis.</text>
</comment>
<comment type="subcellular location">
    <subcellularLocation>
        <location evidence="4">Cell membrane</location>
        <topology evidence="4">Single-pass type I membrane protein</topology>
    </subcellularLocation>
</comment>
<comment type="similarity">
    <text evidence="4">Belongs to the cueball family.</text>
</comment>
<dbReference type="EMBL" id="CM000159">
    <property type="protein sequence ID" value="EDW92844.1"/>
    <property type="molecule type" value="Genomic_DNA"/>
</dbReference>
<dbReference type="SMR" id="B4PD96"/>
<dbReference type="GlyCosmos" id="B4PD96">
    <property type="glycosylation" value="7 sites, No reported glycans"/>
</dbReference>
<dbReference type="EnsemblMetazoa" id="FBtr0267472">
    <property type="protein sequence ID" value="FBpp0265964"/>
    <property type="gene ID" value="FBgn0238239"/>
</dbReference>
<dbReference type="EnsemblMetazoa" id="XM_002093096.4">
    <property type="protein sequence ID" value="XP_002093132.1"/>
    <property type="gene ID" value="LOC6532381"/>
</dbReference>
<dbReference type="GeneID" id="6532381"/>
<dbReference type="KEGG" id="dya:Dyak_GE20954"/>
<dbReference type="eggNOG" id="KOG1215">
    <property type="taxonomic scope" value="Eukaryota"/>
</dbReference>
<dbReference type="HOGENOM" id="CLU_026602_0_0_1"/>
<dbReference type="OMA" id="RCEQNST"/>
<dbReference type="OrthoDB" id="382013at2759"/>
<dbReference type="PhylomeDB" id="B4PD96"/>
<dbReference type="Proteomes" id="UP000002282">
    <property type="component" value="Chromosome 3L"/>
</dbReference>
<dbReference type="GO" id="GO:0005886">
    <property type="term" value="C:plasma membrane"/>
    <property type="evidence" value="ECO:0007669"/>
    <property type="project" value="UniProtKB-SubCell"/>
</dbReference>
<dbReference type="GO" id="GO:0005509">
    <property type="term" value="F:calcium ion binding"/>
    <property type="evidence" value="ECO:0007669"/>
    <property type="project" value="InterPro"/>
</dbReference>
<dbReference type="GO" id="GO:0042813">
    <property type="term" value="F:Wnt receptor activity"/>
    <property type="evidence" value="ECO:0007669"/>
    <property type="project" value="TreeGrafter"/>
</dbReference>
<dbReference type="GO" id="GO:0017147">
    <property type="term" value="F:Wnt-protein binding"/>
    <property type="evidence" value="ECO:0007669"/>
    <property type="project" value="TreeGrafter"/>
</dbReference>
<dbReference type="GO" id="GO:0060070">
    <property type="term" value="P:canonical Wnt signaling pathway"/>
    <property type="evidence" value="ECO:0007669"/>
    <property type="project" value="TreeGrafter"/>
</dbReference>
<dbReference type="GO" id="GO:0048477">
    <property type="term" value="P:oogenesis"/>
    <property type="evidence" value="ECO:0007669"/>
    <property type="project" value="UniProtKB-KW"/>
</dbReference>
<dbReference type="GO" id="GO:0045938">
    <property type="term" value="P:positive regulation of circadian sleep/wake cycle, sleep"/>
    <property type="evidence" value="ECO:0007669"/>
    <property type="project" value="EnsemblMetazoa"/>
</dbReference>
<dbReference type="GO" id="GO:0007283">
    <property type="term" value="P:spermatogenesis"/>
    <property type="evidence" value="ECO:0007669"/>
    <property type="project" value="UniProtKB-KW"/>
</dbReference>
<dbReference type="GO" id="GO:0070328">
    <property type="term" value="P:triglyceride homeostasis"/>
    <property type="evidence" value="ECO:0007669"/>
    <property type="project" value="EnsemblMetazoa"/>
</dbReference>
<dbReference type="CDD" id="cd00054">
    <property type="entry name" value="EGF_CA"/>
    <property type="match status" value="1"/>
</dbReference>
<dbReference type="FunFam" id="2.10.25.10:FF:000744">
    <property type="entry name" value="Delta-like protein"/>
    <property type="match status" value="1"/>
</dbReference>
<dbReference type="FunFam" id="2.120.10.30:FF:000146">
    <property type="entry name" value="Protein cueball"/>
    <property type="match status" value="1"/>
</dbReference>
<dbReference type="Gene3D" id="2.10.25.10">
    <property type="entry name" value="Laminin"/>
    <property type="match status" value="2"/>
</dbReference>
<dbReference type="Gene3D" id="2.120.10.30">
    <property type="entry name" value="TolB, C-terminal domain"/>
    <property type="match status" value="1"/>
</dbReference>
<dbReference type="InterPro" id="IPR011042">
    <property type="entry name" value="6-blade_b-propeller_TolB-like"/>
</dbReference>
<dbReference type="InterPro" id="IPR050778">
    <property type="entry name" value="Cueball_EGF_LRP_Nidogen"/>
</dbReference>
<dbReference type="InterPro" id="IPR001881">
    <property type="entry name" value="EGF-like_Ca-bd_dom"/>
</dbReference>
<dbReference type="InterPro" id="IPR000742">
    <property type="entry name" value="EGF-like_dom"/>
</dbReference>
<dbReference type="InterPro" id="IPR000033">
    <property type="entry name" value="LDLR_classB_rpt"/>
</dbReference>
<dbReference type="PANTHER" id="PTHR46513:SF42">
    <property type="entry name" value="PROTEIN CUEBALL"/>
    <property type="match status" value="1"/>
</dbReference>
<dbReference type="PANTHER" id="PTHR46513">
    <property type="entry name" value="VITELLOGENIN RECEPTOR-LIKE PROTEIN-RELATED-RELATED"/>
    <property type="match status" value="1"/>
</dbReference>
<dbReference type="Pfam" id="PF00058">
    <property type="entry name" value="Ldl_recept_b"/>
    <property type="match status" value="2"/>
</dbReference>
<dbReference type="SMART" id="SM00181">
    <property type="entry name" value="EGF"/>
    <property type="match status" value="3"/>
</dbReference>
<dbReference type="SMART" id="SM00179">
    <property type="entry name" value="EGF_CA"/>
    <property type="match status" value="1"/>
</dbReference>
<dbReference type="SMART" id="SM00135">
    <property type="entry name" value="LY"/>
    <property type="match status" value="4"/>
</dbReference>
<dbReference type="SUPFAM" id="SSF57196">
    <property type="entry name" value="EGF/Laminin"/>
    <property type="match status" value="2"/>
</dbReference>
<dbReference type="SUPFAM" id="SSF63825">
    <property type="entry name" value="YWTD domain"/>
    <property type="match status" value="1"/>
</dbReference>
<dbReference type="PROSITE" id="PS00022">
    <property type="entry name" value="EGF_1"/>
    <property type="match status" value="3"/>
</dbReference>
<dbReference type="PROSITE" id="PS01186">
    <property type="entry name" value="EGF_2"/>
    <property type="match status" value="2"/>
</dbReference>
<dbReference type="PROSITE" id="PS50026">
    <property type="entry name" value="EGF_3"/>
    <property type="match status" value="2"/>
</dbReference>
<dbReference type="PROSITE" id="PS51120">
    <property type="entry name" value="LDLRB"/>
    <property type="match status" value="3"/>
</dbReference>
<gene>
    <name evidence="1" type="primary">cue</name>
    <name type="ORF">GE20954</name>
</gene>
<name>CUE_DROYA</name>
<protein>
    <recommendedName>
        <fullName evidence="1">Protein cueball</fullName>
    </recommendedName>
</protein>
<proteinExistence type="inferred from homology"/>
<sequence length="644" mass="72388">MIRIRFGMDVLLVLLLATCLLSPTHGTPLEWDFAVTLRTKIQFMDSSWQTIATAAHEFDELSALTFDESEELIYFNDLKHRNGSIFSLKRDLIAANHVVEQTIARTGNESVAGLAYDPLTTNLFWSDTEQRKIFFASIHGSATPKVLVDLSAEGGRPDGVAVDVCRRKLYWTNSNVTHPTVERIDLDGSNRTVIVNSDIDMPRGIVVDQLSDRLFWIDDLKGVFFSVESSKLDGSDRQVVLKDKHHEPLNLAVTNDAIYWTDRTTRSVWSHPKVPVIRVTTTSKPEEEDSTDATDFKDPEPVAEDCPLVRVANLSEEARGIVARTGFYQRLQKDHHCASIVRKVKQRVDEQSRKFEVSSLLDQKMKVLENERCMNNGEYKAATDLCICPTGFKGSRCEIRECHNYCVHGTCQMSESAYPKCYCQPGFTGERCEVSVCAGLCLNGGHCRASKEENEAPTCECPAKFGGARCEQNSTEICSLFCRLLKHEPEMYVPFGCHSICEELAQGNSTNIAVPQYQHLEVCLTPTVWTSSVIIILVVGIVSSLLLVAVIVHGIRRLYKPKRPRIRKTFVVRKQARTNSAGDTPLTNRPLATEQCEITIENCCNMNICETPCFDPKLVEQTLSKSSCKEDKKILIHNMEDDLY</sequence>
<organism>
    <name type="scientific">Drosophila yakuba</name>
    <name type="common">Fruit fly</name>
    <dbReference type="NCBI Taxonomy" id="7245"/>
    <lineage>
        <taxon>Eukaryota</taxon>
        <taxon>Metazoa</taxon>
        <taxon>Ecdysozoa</taxon>
        <taxon>Arthropoda</taxon>
        <taxon>Hexapoda</taxon>
        <taxon>Insecta</taxon>
        <taxon>Pterygota</taxon>
        <taxon>Neoptera</taxon>
        <taxon>Endopterygota</taxon>
        <taxon>Diptera</taxon>
        <taxon>Brachycera</taxon>
        <taxon>Muscomorpha</taxon>
        <taxon>Ephydroidea</taxon>
        <taxon>Drosophilidae</taxon>
        <taxon>Drosophila</taxon>
        <taxon>Sophophora</taxon>
    </lineage>
</organism>
<feature type="signal peptide" evidence="2">
    <location>
        <begin position="1"/>
        <end position="26"/>
    </location>
</feature>
<feature type="chain" id="PRO_0000386580" description="Protein cueball" evidence="2">
    <location>
        <begin position="27"/>
        <end position="644"/>
    </location>
</feature>
<feature type="topological domain" description="Extracellular" evidence="2">
    <location>
        <begin position="27"/>
        <end position="531"/>
    </location>
</feature>
<feature type="transmembrane region" description="Helical" evidence="2">
    <location>
        <begin position="532"/>
        <end position="552"/>
    </location>
</feature>
<feature type="topological domain" description="Cytoplasmic" evidence="2">
    <location>
        <begin position="553"/>
        <end position="644"/>
    </location>
</feature>
<feature type="repeat" description="LDL-receptor class B 1" evidence="2">
    <location>
        <begin position="121"/>
        <end position="166"/>
    </location>
</feature>
<feature type="repeat" description="LDL-receptor class B 2" evidence="2">
    <location>
        <begin position="167"/>
        <end position="211"/>
    </location>
</feature>
<feature type="repeat" description="LDL-receptor class B 3" evidence="2">
    <location>
        <begin position="212"/>
        <end position="257"/>
    </location>
</feature>
<feature type="domain" description="EGF-like 1" evidence="3">
    <location>
        <begin position="398"/>
        <end position="430"/>
    </location>
</feature>
<feature type="domain" description="EGF-like 2" evidence="3">
    <location>
        <begin position="433"/>
        <end position="471"/>
    </location>
</feature>
<feature type="glycosylation site" description="N-linked (GlcNAc...) asparagine" evidence="2">
    <location>
        <position position="82"/>
    </location>
</feature>
<feature type="glycosylation site" description="N-linked (GlcNAc...) asparagine" evidence="2">
    <location>
        <position position="108"/>
    </location>
</feature>
<feature type="glycosylation site" description="N-linked (GlcNAc...) asparagine" evidence="2">
    <location>
        <position position="175"/>
    </location>
</feature>
<feature type="glycosylation site" description="N-linked (GlcNAc...) asparagine" evidence="2">
    <location>
        <position position="190"/>
    </location>
</feature>
<feature type="glycosylation site" description="N-linked (GlcNAc...) asparagine" evidence="2">
    <location>
        <position position="313"/>
    </location>
</feature>
<feature type="glycosylation site" description="N-linked (GlcNAc...) asparagine" evidence="2">
    <location>
        <position position="473"/>
    </location>
</feature>
<feature type="glycosylation site" description="N-linked (GlcNAc...) asparagine" evidence="2">
    <location>
        <position position="508"/>
    </location>
</feature>
<feature type="disulfide bond" evidence="3">
    <location>
        <begin position="402"/>
        <end position="411"/>
    </location>
</feature>
<feature type="disulfide bond" evidence="3">
    <location>
        <begin position="406"/>
        <end position="421"/>
    </location>
</feature>
<feature type="disulfide bond" evidence="3">
    <location>
        <begin position="437"/>
        <end position="447"/>
    </location>
</feature>
<feature type="disulfide bond" evidence="3">
    <location>
        <begin position="441"/>
        <end position="459"/>
    </location>
</feature>
<feature type="disulfide bond" evidence="3">
    <location>
        <begin position="461"/>
        <end position="470"/>
    </location>
</feature>
<keyword id="KW-1003">Cell membrane</keyword>
<keyword id="KW-0221">Differentiation</keyword>
<keyword id="KW-1015">Disulfide bond</keyword>
<keyword id="KW-0245">EGF-like domain</keyword>
<keyword id="KW-0325">Glycoprotein</keyword>
<keyword id="KW-0472">Membrane</keyword>
<keyword id="KW-0896">Oogenesis</keyword>
<keyword id="KW-0677">Repeat</keyword>
<keyword id="KW-0732">Signal</keyword>
<keyword id="KW-0744">Spermatogenesis</keyword>
<keyword id="KW-0812">Transmembrane</keyword>
<keyword id="KW-1133">Transmembrane helix</keyword>
<accession>B4PD96</accession>